<accession>P37653</accession>
<accession>P37654</accession>
<accession>P76712</accession>
<accession>P76713</accession>
<accession>Q2M7J5</accession>
<accession>Q8RSS7</accession>
<organism>
    <name type="scientific">Escherichia coli (strain K12)</name>
    <dbReference type="NCBI Taxonomy" id="83333"/>
    <lineage>
        <taxon>Bacteria</taxon>
        <taxon>Pseudomonadati</taxon>
        <taxon>Pseudomonadota</taxon>
        <taxon>Gammaproteobacteria</taxon>
        <taxon>Enterobacterales</taxon>
        <taxon>Enterobacteriaceae</taxon>
        <taxon>Escherichia</taxon>
    </lineage>
</organism>
<evidence type="ECO:0000250" key="1"/>
<evidence type="ECO:0000255" key="2"/>
<evidence type="ECO:0000269" key="3">
    <source>
    </source>
</evidence>
<evidence type="ECO:0000269" key="4">
    <source>
    </source>
</evidence>
<evidence type="ECO:0000305" key="5"/>
<evidence type="ECO:0000305" key="6">
    <source>
    </source>
</evidence>
<evidence type="ECO:0007829" key="7">
    <source>
        <dbReference type="PDB" id="9FMV"/>
    </source>
</evidence>
<evidence type="ECO:0007829" key="8">
    <source>
        <dbReference type="PDB" id="9FNN"/>
    </source>
</evidence>
<evidence type="ECO:0007829" key="9">
    <source>
        <dbReference type="PDB" id="9FP0"/>
    </source>
</evidence>
<protein>
    <recommendedName>
        <fullName>Cellulose synthase catalytic subunit [UDP-forming]</fullName>
        <ecNumber>2.4.1.12</ecNumber>
    </recommendedName>
</protein>
<keyword id="KW-0002">3D-structure</keyword>
<keyword id="KW-0973">c-di-GMP</keyword>
<keyword id="KW-0997">Cell inner membrane</keyword>
<keyword id="KW-1003">Cell membrane</keyword>
<keyword id="KW-0135">Cellulose biosynthesis</keyword>
<keyword id="KW-0328">Glycosyltransferase</keyword>
<keyword id="KW-0472">Membrane</keyword>
<keyword id="KW-1185">Reference proteome</keyword>
<keyword id="KW-0808">Transferase</keyword>
<keyword id="KW-0812">Transmembrane</keyword>
<keyword id="KW-1133">Transmembrane helix</keyword>
<gene>
    <name type="primary">bcsA</name>
    <name type="synonym">yhjO</name>
    <name type="synonym">yhjP</name>
    <name type="ordered locus">b3533</name>
    <name type="ordered locus">JW5665</name>
</gene>
<comment type="function">
    <text evidence="3 4">Catalytic subunit of cellulose synthase. It polymerizes uridine 5'-diphosphate glucose to cellulose, which is produced as an extracellular component for mechanical and chemical protection at the onset of the stationary phase, when the cells exhibit multicellular behavior (rdar morphotype). Coexpression of cellulose and thin aggregative fimbriae (curli fimbrae or fibers) leads to a hydrophobic network with tightly packed cells embedded in a highly inert matrix that confers cohesion, elasticity and tissue-like properties to colonies (PubMed:24097954).</text>
</comment>
<comment type="catalytic activity">
    <reaction>
        <text>[(1-&gt;4)-beta-D-glucosyl](n) + UDP-alpha-D-glucose = [(1-&gt;4)-beta-D-glucosyl](n+1) + UDP + H(+)</text>
        <dbReference type="Rhea" id="RHEA:19929"/>
        <dbReference type="Rhea" id="RHEA-COMP:10033"/>
        <dbReference type="Rhea" id="RHEA-COMP:10034"/>
        <dbReference type="ChEBI" id="CHEBI:15378"/>
        <dbReference type="ChEBI" id="CHEBI:18246"/>
        <dbReference type="ChEBI" id="CHEBI:58223"/>
        <dbReference type="ChEBI" id="CHEBI:58885"/>
        <dbReference type="EC" id="2.4.1.12"/>
    </reaction>
</comment>
<comment type="cofactor">
    <cofactor evidence="1">
        <name>Mg(2+)</name>
        <dbReference type="ChEBI" id="CHEBI:18420"/>
    </cofactor>
</comment>
<comment type="activity regulation">
    <text>Activated by bis-(3'-5') cyclic diguanylic acid (c-di-GMP).</text>
</comment>
<comment type="pathway">
    <text>Glycan metabolism; bacterial cellulose biosynthesis.</text>
</comment>
<comment type="subcellular location">
    <subcellularLocation>
        <location evidence="5">Cell inner membrane</location>
        <topology evidence="5">Multi-pass membrane protein</topology>
    </subcellularLocation>
</comment>
<comment type="induction">
    <text evidence="4">Part of the yhjR-bcsQABZC operon. Expressed at low levels in mid-log phase, expression increases as cells enter stationary phase, the increase in stationary phase is dependent on rpoS (PubMed:24097954). Expression is higher at 28 than 37 degrees Celsius (at protein level) (PubMed:24097954).</text>
</comment>
<comment type="domain">
    <text>There are two conserved domains in the globular part of the protein: the N-terminal domain (domain A) contains the conserved DXD motif and is possibly involved in catalysis and substrate binding. The C-terminal domain (domain B) contains the QXXRW motif and is present only in processive glycosyl transferases. It could be involved in the processivity function of the enzyme, possibly required for holding the growing glycan chain in the active site.</text>
</comment>
<comment type="disruption phenotype">
    <text evidence="4">When disrupted in a cellulose-synthesizing strain (a strain K12 / W3110 derivative called AR3110 with a restored, functional bcsQ gene), cellulose is no longer made and the rdar morphotype is lost (PubMed:24097954).</text>
</comment>
<comment type="miscellaneous">
    <text evidence="6">The genes bscA, bcsB, bcsZ and bcsC are constitutively transcribed but cellulose synthesis occurs only when DgcC, a putative transmembrane protein regulated by CsgD, is expressed. Cellulose production is abolished in E.coli K12 / MG1655 and W3110 due to a premature stop codon in bcsQ (PubMed:24097954).</text>
</comment>
<comment type="similarity">
    <text evidence="5">Belongs to the glycosyltransferase 2 family.</text>
</comment>
<comment type="sequence caution" evidence="5">
    <conflict type="frameshift">
        <sequence resource="EMBL-CDS" id="AAB18510"/>
    </conflict>
</comment>
<comment type="sequence caution" evidence="5">
    <conflict type="erroneous initiation">
        <sequence resource="EMBL-CDS" id="AAB18511"/>
    </conflict>
    <text>Extended N-terminus.</text>
</comment>
<comment type="sequence caution" evidence="5">
    <conflict type="frameshift">
        <sequence resource="EMBL-CDS" id="AAB18511"/>
    </conflict>
</comment>
<proteinExistence type="evidence at protein level"/>
<reference key="1">
    <citation type="journal article" date="1994" name="Nucleic Acids Res.">
        <title>Analysis of the Escherichia coli genome. V. DNA sequence of the region from 76.0 to 81.5 minutes.</title>
        <authorList>
            <person name="Sofia H.J."/>
            <person name="Burland V."/>
            <person name="Daniels D.L."/>
            <person name="Plunkett G. III"/>
            <person name="Blattner F.R."/>
        </authorList>
    </citation>
    <scope>NUCLEOTIDE SEQUENCE [LARGE SCALE GENOMIC DNA]</scope>
    <source>
        <strain>K12 / MG1655 / ATCC 47076</strain>
    </source>
</reference>
<reference key="2">
    <citation type="journal article" date="1997" name="Science">
        <title>The complete genome sequence of Escherichia coli K-12.</title>
        <authorList>
            <person name="Blattner F.R."/>
            <person name="Plunkett G. III"/>
            <person name="Bloch C.A."/>
            <person name="Perna N.T."/>
            <person name="Burland V."/>
            <person name="Riley M."/>
            <person name="Collado-Vides J."/>
            <person name="Glasner J.D."/>
            <person name="Rode C.K."/>
            <person name="Mayhew G.F."/>
            <person name="Gregor J."/>
            <person name="Davis N.W."/>
            <person name="Kirkpatrick H.A."/>
            <person name="Goeden M.A."/>
            <person name="Rose D.J."/>
            <person name="Mau B."/>
            <person name="Shao Y."/>
        </authorList>
    </citation>
    <scope>NUCLEOTIDE SEQUENCE [LARGE SCALE GENOMIC DNA]</scope>
    <scope>SEQUENCE REVISION</scope>
    <source>
        <strain>K12 / MG1655 / ATCC 47076</strain>
    </source>
</reference>
<reference key="3">
    <citation type="journal article" date="2006" name="Mol. Syst. Biol.">
        <title>Highly accurate genome sequences of Escherichia coli K-12 strains MG1655 and W3110.</title>
        <authorList>
            <person name="Hayashi K."/>
            <person name="Morooka N."/>
            <person name="Yamamoto Y."/>
            <person name="Fujita K."/>
            <person name="Isono K."/>
            <person name="Choi S."/>
            <person name="Ohtsubo E."/>
            <person name="Baba T."/>
            <person name="Wanner B.L."/>
            <person name="Mori H."/>
            <person name="Horiuchi T."/>
        </authorList>
    </citation>
    <scope>NUCLEOTIDE SEQUENCE [LARGE SCALE GENOMIC DNA]</scope>
    <source>
        <strain>K12 / W3110 / ATCC 27325 / DSM 5911</strain>
    </source>
</reference>
<reference key="4">
    <citation type="journal article" date="2001" name="Mol. Microbiol.">
        <title>The multicellular morphotypes of Salmonella typhimurium and Escherichia coli produce cellulose as the second component of the extracellular matrix.</title>
        <authorList>
            <person name="Zogaj X."/>
            <person name="Nimtz M."/>
            <person name="Rohde M."/>
            <person name="Bokranz W."/>
            <person name="Roemling U."/>
        </authorList>
    </citation>
    <scope>CHARACTERIZATION</scope>
    <source>
        <strain>ECOR 10</strain>
        <strain>ECOR 12</strain>
        <strain>TOB1</strain>
    </source>
</reference>
<reference key="5">
    <citation type="journal article" date="2013" name="J. Bacteriol.">
        <title>Cellulose as an architectural element in spatially structured Escherichia coli biofilms.</title>
        <authorList>
            <person name="Serra D.O."/>
            <person name="Richter A.M."/>
            <person name="Hengge R."/>
        </authorList>
    </citation>
    <scope>FUNCTION</scope>
    <scope>INDUCTION</scope>
    <scope>DISRUPTION PHENOTYPE</scope>
    <source>
        <strain>K12 / W3110 / AR3110</strain>
    </source>
</reference>
<sequence length="872" mass="99785">MSILTRWLLIPPVNARLIGRYRDYRRHGASAFSATLGCFWMILAWIFIPLEHPRWQRIRAEHKNLYPHINASRPRPLDPVRYLIQTCWLLIGASRKETPKPRRRAFSGLQNIRGRYHQWMNELPERVSHKTQHLDEKKELGHLSAGARRLILGIIVTFSLILALICVTQPFNPLAQFIFLMLLWGVALIVRRMPGRFSALMLIVLSLTVSCRYIWWRYTSTLNWDDPVSLVCGLILLFAETYAWIVLVLGYFQVVWPLNRQPVPLPKDMSLWPSVDIFVPTYNEDLNVVKNTIYASLGIDWPKDKLNIWILDDGGREEFRQFAQNVGVKYIARTTHEHAKAGNINNALKYAKGEFVSIFDCDHVPTRSFLQMTMGWFLKEKQLAMMQTPHHFFSPDPFERNLGRFRKTPNEGTLFYGLVQDGNDMWDATFFCGSCAVIRRKPLDEIGGIAVETVTEDAHTSLRLHRRGYTSAYMRIPQAAGLATESLSAHIGQRIRWARGMVQIFRLDNPLTGKGLKFAQRLCYVNAMFHFLSGIPRLIFLTAPLAFLLLHAYIIYAPALMIALFVLPHMIHASLTNSKIQGKYRHSFWSEIYETVLAWYIAPPTLVALINPHKGKFNVTAKGGLVEEEYVDWVISRPYIFLVLLNLVGVAVGIWRYFYGPPTEMLTVVVSMVWVFYNLIVLGGAVAVSVESKQVRRSHRVEMTMPAAIAREDGHLFSCTVQDFSDGGLGIKINGQAQILEGQKVNLLLKRGQQEYVFPTQVARVMGNEVGLKLMPLTTQQHIDFVQCTFARADTWALWQDSYPEDKPLESLLDILKLGFRGYRHLAEFAPSSVKGIFRVLTSLVSWVVSFIPRRPERSETAQPSDQALAQQ</sequence>
<feature type="chain" id="PRO_0000059267" description="Cellulose synthase catalytic subunit [UDP-forming]">
    <location>
        <begin position="1"/>
        <end position="872"/>
    </location>
</feature>
<feature type="transmembrane region" description="Helical" evidence="2">
    <location>
        <begin position="30"/>
        <end position="50"/>
    </location>
</feature>
<feature type="transmembrane region" description="Helical" evidence="2">
    <location>
        <begin position="151"/>
        <end position="171"/>
    </location>
</feature>
<feature type="transmembrane region" description="Helical" evidence="2">
    <location>
        <begin position="173"/>
        <end position="193"/>
    </location>
</feature>
<feature type="transmembrane region" description="Helical" evidence="2">
    <location>
        <begin position="230"/>
        <end position="250"/>
    </location>
</feature>
<feature type="transmembrane region" description="Helical" evidence="2">
    <location>
        <begin position="525"/>
        <end position="545"/>
    </location>
</feature>
<feature type="transmembrane region" description="Helical" evidence="2">
    <location>
        <begin position="547"/>
        <end position="567"/>
    </location>
</feature>
<feature type="transmembrane region" description="Helical" evidence="2">
    <location>
        <begin position="592"/>
        <end position="612"/>
    </location>
</feature>
<feature type="transmembrane region" description="Helical" evidence="2">
    <location>
        <begin position="640"/>
        <end position="660"/>
    </location>
</feature>
<feature type="transmembrane region" description="Helical" evidence="2">
    <location>
        <begin position="668"/>
        <end position="688"/>
    </location>
</feature>
<feature type="transmembrane region" description="Helical" evidence="2">
    <location>
        <begin position="833"/>
        <end position="853"/>
    </location>
</feature>
<feature type="domain" description="PilZ">
    <location>
        <begin position="694"/>
        <end position="790"/>
    </location>
</feature>
<feature type="region of interest" description="Catalytic subdomain A">
    <location>
        <begin position="271"/>
        <end position="364"/>
    </location>
</feature>
<feature type="region of interest" description="Catalytic subdomain B">
    <location>
        <begin position="441"/>
        <end position="501"/>
    </location>
</feature>
<feature type="active site" evidence="2">
    <location>
        <position position="313"/>
    </location>
</feature>
<feature type="active site" evidence="2">
    <location>
        <position position="457"/>
    </location>
</feature>
<feature type="binding site" evidence="2">
    <location>
        <position position="360"/>
    </location>
    <ligand>
        <name>substrate</name>
    </ligand>
</feature>
<feature type="binding site" evidence="2">
    <location>
        <position position="362"/>
    </location>
    <ligand>
        <name>substrate</name>
    </ligand>
</feature>
<feature type="helix" evidence="8">
    <location>
        <begin position="2"/>
        <end position="8"/>
    </location>
</feature>
<feature type="helix" evidence="8">
    <location>
        <begin position="11"/>
        <end position="26"/>
    </location>
</feature>
<feature type="helix" evidence="8">
    <location>
        <begin position="31"/>
        <end position="47"/>
    </location>
</feature>
<feature type="helix" evidence="8">
    <location>
        <begin position="53"/>
        <end position="60"/>
    </location>
</feature>
<feature type="helix" evidence="8">
    <location>
        <begin position="62"/>
        <end position="65"/>
    </location>
</feature>
<feature type="helix" evidence="8">
    <location>
        <begin position="78"/>
        <end position="91"/>
    </location>
</feature>
<feature type="helix" evidence="9">
    <location>
        <begin position="106"/>
        <end position="133"/>
    </location>
</feature>
<feature type="helix" evidence="8">
    <location>
        <begin position="145"/>
        <end position="167"/>
    </location>
</feature>
<feature type="helix" evidence="8">
    <location>
        <begin position="173"/>
        <end position="191"/>
    </location>
</feature>
<feature type="helix" evidence="8">
    <location>
        <begin position="197"/>
        <end position="220"/>
    </location>
</feature>
<feature type="strand" evidence="7">
    <location>
        <begin position="224"/>
        <end position="226"/>
    </location>
</feature>
<feature type="helix" evidence="8">
    <location>
        <begin position="228"/>
        <end position="253"/>
    </location>
</feature>
<feature type="helix" evidence="9">
    <location>
        <begin position="269"/>
        <end position="271"/>
    </location>
</feature>
<feature type="strand" evidence="8">
    <location>
        <begin position="275"/>
        <end position="283"/>
    </location>
</feature>
<feature type="helix" evidence="8">
    <location>
        <begin position="286"/>
        <end position="297"/>
    </location>
</feature>
<feature type="strand" evidence="9">
    <location>
        <begin position="299"/>
        <end position="301"/>
    </location>
</feature>
<feature type="helix" evidence="8">
    <location>
        <begin position="303"/>
        <end position="305"/>
    </location>
</feature>
<feature type="strand" evidence="8">
    <location>
        <begin position="306"/>
        <end position="314"/>
    </location>
</feature>
<feature type="helix" evidence="8">
    <location>
        <begin position="317"/>
        <end position="326"/>
    </location>
</feature>
<feature type="strand" evidence="8">
    <location>
        <begin position="329"/>
        <end position="331"/>
    </location>
</feature>
<feature type="helix" evidence="8">
    <location>
        <begin position="339"/>
        <end position="350"/>
    </location>
</feature>
<feature type="strand" evidence="8">
    <location>
        <begin position="354"/>
        <end position="358"/>
    </location>
</feature>
<feature type="helix" evidence="8">
    <location>
        <begin position="369"/>
        <end position="373"/>
    </location>
</feature>
<feature type="helix" evidence="8">
    <location>
        <begin position="376"/>
        <end position="378"/>
    </location>
</feature>
<feature type="strand" evidence="8">
    <location>
        <begin position="381"/>
        <end position="387"/>
    </location>
</feature>
<feature type="helix" evidence="8">
    <location>
        <begin position="397"/>
        <end position="402"/>
    </location>
</feature>
<feature type="strand" evidence="8">
    <location>
        <begin position="405"/>
        <end position="408"/>
    </location>
</feature>
<feature type="helix" evidence="8">
    <location>
        <begin position="411"/>
        <end position="413"/>
    </location>
</feature>
<feature type="turn" evidence="8">
    <location>
        <begin position="414"/>
        <end position="418"/>
    </location>
</feature>
<feature type="helix" evidence="8">
    <location>
        <begin position="419"/>
        <end position="425"/>
    </location>
</feature>
<feature type="strand" evidence="8">
    <location>
        <begin position="433"/>
        <end position="439"/>
    </location>
</feature>
<feature type="helix" evidence="8">
    <location>
        <begin position="440"/>
        <end position="445"/>
    </location>
</feature>
<feature type="strand" evidence="8">
    <location>
        <begin position="452"/>
        <end position="454"/>
    </location>
</feature>
<feature type="helix" evidence="8">
    <location>
        <begin position="456"/>
        <end position="466"/>
    </location>
</feature>
<feature type="strand" evidence="8">
    <location>
        <begin position="470"/>
        <end position="473"/>
    </location>
</feature>
<feature type="strand" evidence="8">
    <location>
        <begin position="479"/>
        <end position="481"/>
    </location>
</feature>
<feature type="helix" evidence="8">
    <location>
        <begin position="487"/>
        <end position="507"/>
    </location>
</feature>
<feature type="strand" evidence="8">
    <location>
        <begin position="512"/>
        <end position="515"/>
    </location>
</feature>
<feature type="helix" evidence="8">
    <location>
        <begin position="518"/>
        <end position="529"/>
    </location>
</feature>
<feature type="helix" evidence="8">
    <location>
        <begin position="530"/>
        <end position="532"/>
    </location>
</feature>
<feature type="helix" evidence="8">
    <location>
        <begin position="534"/>
        <end position="541"/>
    </location>
</feature>
<feature type="helix" evidence="8">
    <location>
        <begin position="544"/>
        <end position="549"/>
    </location>
</feature>
<feature type="helix" evidence="8">
    <location>
        <begin position="559"/>
        <end position="580"/>
    </location>
</feature>
<feature type="turn" evidence="8">
    <location>
        <begin position="581"/>
        <end position="584"/>
    </location>
</feature>
<feature type="helix" evidence="8">
    <location>
        <begin position="590"/>
        <end position="610"/>
    </location>
</feature>
<feature type="strand" evidence="8">
    <location>
        <begin position="626"/>
        <end position="628"/>
    </location>
</feature>
<feature type="helix" evidence="8">
    <location>
        <begin position="633"/>
        <end position="659"/>
    </location>
</feature>
<feature type="turn" evidence="8">
    <location>
        <begin position="662"/>
        <end position="665"/>
    </location>
</feature>
<feature type="helix" evidence="8">
    <location>
        <begin position="666"/>
        <end position="688"/>
    </location>
</feature>
<feature type="strand" evidence="8">
    <location>
        <begin position="701"/>
        <end position="710"/>
    </location>
</feature>
<feature type="strand" evidence="8">
    <location>
        <begin position="716"/>
        <end position="725"/>
    </location>
</feature>
<feature type="strand" evidence="8">
    <location>
        <begin position="728"/>
        <end position="732"/>
    </location>
</feature>
<feature type="strand" evidence="8">
    <location>
        <begin position="744"/>
        <end position="751"/>
    </location>
</feature>
<feature type="strand" evidence="8">
    <location>
        <begin position="754"/>
        <end position="766"/>
    </location>
</feature>
<feature type="strand" evidence="8">
    <location>
        <begin position="769"/>
        <end position="774"/>
    </location>
</feature>
<feature type="helix" evidence="8">
    <location>
        <begin position="779"/>
        <end position="788"/>
    </location>
</feature>
<feature type="helix" evidence="8">
    <location>
        <begin position="795"/>
        <end position="801"/>
    </location>
</feature>
<feature type="helix" evidence="8">
    <location>
        <begin position="808"/>
        <end position="826"/>
    </location>
</feature>
<feature type="helix" evidence="8">
    <location>
        <begin position="833"/>
        <end position="851"/>
    </location>
</feature>
<dbReference type="EC" id="2.4.1.12"/>
<dbReference type="EMBL" id="U00039">
    <property type="protein sequence ID" value="AAB18510.1"/>
    <property type="status" value="ALT_FRAME"/>
    <property type="molecule type" value="Genomic_DNA"/>
</dbReference>
<dbReference type="EMBL" id="U00039">
    <property type="protein sequence ID" value="AAB18511.1"/>
    <property type="status" value="ALT_SEQ"/>
    <property type="molecule type" value="Genomic_DNA"/>
</dbReference>
<dbReference type="EMBL" id="U00096">
    <property type="protein sequence ID" value="AAC76558.2"/>
    <property type="molecule type" value="Genomic_DNA"/>
</dbReference>
<dbReference type="EMBL" id="AP009048">
    <property type="protein sequence ID" value="BAE77761.1"/>
    <property type="molecule type" value="Genomic_DNA"/>
</dbReference>
<dbReference type="PIR" id="H65151">
    <property type="entry name" value="H65151"/>
</dbReference>
<dbReference type="PIR" id="S47754">
    <property type="entry name" value="S47754"/>
</dbReference>
<dbReference type="PIR" id="S47755">
    <property type="entry name" value="S47755"/>
</dbReference>
<dbReference type="RefSeq" id="NP_417990.4">
    <property type="nucleotide sequence ID" value="NC_000913.3"/>
</dbReference>
<dbReference type="RefSeq" id="WP_000025892.1">
    <property type="nucleotide sequence ID" value="NZ_SSZK01000039.1"/>
</dbReference>
<dbReference type="PDB" id="7LBY">
    <property type="method" value="EM"/>
    <property type="resolution" value="4.20 A"/>
    <property type="chains" value="A=2-872"/>
</dbReference>
<dbReference type="PDB" id="9B8V">
    <property type="method" value="EM"/>
    <property type="resolution" value="4.00 A"/>
    <property type="chains" value="E=2-872"/>
</dbReference>
<dbReference type="PDB" id="9FMV">
    <property type="method" value="EM"/>
    <property type="resolution" value="3.43 A"/>
    <property type="chains" value="A=1-872"/>
</dbReference>
<dbReference type="PDB" id="9FMZ">
    <property type="method" value="EM"/>
    <property type="resolution" value="3.60 A"/>
    <property type="chains" value="A=1-872"/>
</dbReference>
<dbReference type="PDB" id="9FNN">
    <property type="method" value="EM"/>
    <property type="resolution" value="2.85 A"/>
    <property type="chains" value="A=1-872"/>
</dbReference>
<dbReference type="PDB" id="9FP0">
    <property type="method" value="EM"/>
    <property type="resolution" value="3.37 A"/>
    <property type="chains" value="A=1-872"/>
</dbReference>
<dbReference type="PDBsum" id="7LBY"/>
<dbReference type="PDBsum" id="9B8V"/>
<dbReference type="PDBsum" id="9FMV"/>
<dbReference type="PDBsum" id="9FMZ"/>
<dbReference type="PDBsum" id="9FNN"/>
<dbReference type="PDBsum" id="9FP0"/>
<dbReference type="EMDB" id="EMD-23267"/>
<dbReference type="EMDB" id="EMD-44359"/>
<dbReference type="SMR" id="P37653"/>
<dbReference type="BioGRID" id="4260855">
    <property type="interactions" value="268"/>
</dbReference>
<dbReference type="BioGRID" id="852361">
    <property type="interactions" value="1"/>
</dbReference>
<dbReference type="DIP" id="DIP-12387N"/>
<dbReference type="FunCoup" id="P37653">
    <property type="interactions" value="210"/>
</dbReference>
<dbReference type="IntAct" id="P37653">
    <property type="interactions" value="4"/>
</dbReference>
<dbReference type="STRING" id="511145.b3533"/>
<dbReference type="CAZy" id="GT2">
    <property type="family name" value="Glycosyltransferase Family 2"/>
</dbReference>
<dbReference type="TCDB" id="4.D.3.1.6">
    <property type="family name" value="the glycan glucosyl transferase (opgh) family"/>
</dbReference>
<dbReference type="PaxDb" id="511145-b3533"/>
<dbReference type="EnsemblBacteria" id="AAC76558">
    <property type="protein sequence ID" value="AAC76558"/>
    <property type="gene ID" value="b3533"/>
</dbReference>
<dbReference type="GeneID" id="75173723"/>
<dbReference type="GeneID" id="948053"/>
<dbReference type="KEGG" id="ecj:JW5665"/>
<dbReference type="KEGG" id="eco:b3533"/>
<dbReference type="KEGG" id="ecoc:C3026_19140"/>
<dbReference type="PATRIC" id="fig|511145.12.peg.3644"/>
<dbReference type="EchoBASE" id="EB2169"/>
<dbReference type="eggNOG" id="COG1215">
    <property type="taxonomic scope" value="Bacteria"/>
</dbReference>
<dbReference type="HOGENOM" id="CLU_011907_5_0_6"/>
<dbReference type="InParanoid" id="P37653"/>
<dbReference type="OMA" id="AWYIARP"/>
<dbReference type="OrthoDB" id="9806824at2"/>
<dbReference type="PhylomeDB" id="P37653"/>
<dbReference type="BioCyc" id="EcoCyc:EG12260-MONOMER"/>
<dbReference type="BioCyc" id="MetaCyc:EG12260-MONOMER"/>
<dbReference type="UniPathway" id="UPA00694"/>
<dbReference type="PRO" id="PR:P37653"/>
<dbReference type="Proteomes" id="UP000000625">
    <property type="component" value="Chromosome"/>
</dbReference>
<dbReference type="GO" id="GO:0005886">
    <property type="term" value="C:plasma membrane"/>
    <property type="evidence" value="ECO:0000314"/>
    <property type="project" value="EcoCyc"/>
</dbReference>
<dbReference type="GO" id="GO:0016760">
    <property type="term" value="F:cellulose synthase (UDP-forming) activity"/>
    <property type="evidence" value="ECO:0007669"/>
    <property type="project" value="UniProtKB-EC"/>
</dbReference>
<dbReference type="GO" id="GO:0035438">
    <property type="term" value="F:cyclic-di-GMP binding"/>
    <property type="evidence" value="ECO:0007669"/>
    <property type="project" value="InterPro"/>
</dbReference>
<dbReference type="GO" id="GO:0016758">
    <property type="term" value="F:hexosyltransferase activity"/>
    <property type="evidence" value="ECO:0000318"/>
    <property type="project" value="GO_Central"/>
</dbReference>
<dbReference type="GO" id="GO:0090540">
    <property type="term" value="P:bacterial cellulose biosynthetic process"/>
    <property type="evidence" value="ECO:0000315"/>
    <property type="project" value="EcoCyc"/>
</dbReference>
<dbReference type="GO" id="GO:0006011">
    <property type="term" value="P:UDP-alpha-D-glucose metabolic process"/>
    <property type="evidence" value="ECO:0007669"/>
    <property type="project" value="InterPro"/>
</dbReference>
<dbReference type="CDD" id="cd06421">
    <property type="entry name" value="CESA_CelA_like"/>
    <property type="match status" value="1"/>
</dbReference>
<dbReference type="FunFam" id="2.40.10.220:FF:000001">
    <property type="entry name" value="Cellulose synthase catalytic subunit [UDP-forming]"/>
    <property type="match status" value="1"/>
</dbReference>
<dbReference type="FunFam" id="3.90.550.10:FF:000061">
    <property type="entry name" value="Cellulose synthase catalytic subunit [UDP-forming]"/>
    <property type="match status" value="1"/>
</dbReference>
<dbReference type="Gene3D" id="2.40.10.220">
    <property type="entry name" value="predicted glycosyltransferase like domains"/>
    <property type="match status" value="1"/>
</dbReference>
<dbReference type="Gene3D" id="3.90.550.10">
    <property type="entry name" value="Spore Coat Polysaccharide Biosynthesis Protein SpsA, Chain A"/>
    <property type="match status" value="1"/>
</dbReference>
<dbReference type="InterPro" id="IPR003919">
    <property type="entry name" value="Cell_synth_A"/>
</dbReference>
<dbReference type="InterPro" id="IPR001173">
    <property type="entry name" value="Glyco_trans_2-like"/>
</dbReference>
<dbReference type="InterPro" id="IPR050321">
    <property type="entry name" value="Glycosyltr_2/OpgH_subfam"/>
</dbReference>
<dbReference type="InterPro" id="IPR029044">
    <property type="entry name" value="Nucleotide-diphossugar_trans"/>
</dbReference>
<dbReference type="InterPro" id="IPR009875">
    <property type="entry name" value="PilZ_domain"/>
</dbReference>
<dbReference type="NCBIfam" id="TIGR03030">
    <property type="entry name" value="CelA"/>
    <property type="match status" value="1"/>
</dbReference>
<dbReference type="NCBIfam" id="NF008558">
    <property type="entry name" value="PRK11498.1"/>
    <property type="match status" value="1"/>
</dbReference>
<dbReference type="PANTHER" id="PTHR43867">
    <property type="entry name" value="CELLULOSE SYNTHASE CATALYTIC SUBUNIT A [UDP-FORMING]"/>
    <property type="match status" value="1"/>
</dbReference>
<dbReference type="PANTHER" id="PTHR43867:SF2">
    <property type="entry name" value="CELLULOSE SYNTHASE CATALYTIC SUBUNIT A [UDP-FORMING]"/>
    <property type="match status" value="1"/>
</dbReference>
<dbReference type="Pfam" id="PF00535">
    <property type="entry name" value="Glycos_transf_2"/>
    <property type="match status" value="1"/>
</dbReference>
<dbReference type="Pfam" id="PF07238">
    <property type="entry name" value="PilZ"/>
    <property type="match status" value="1"/>
</dbReference>
<dbReference type="PRINTS" id="PR01439">
    <property type="entry name" value="CELLSNTHASEA"/>
</dbReference>
<dbReference type="SUPFAM" id="SSF53448">
    <property type="entry name" value="Nucleotide-diphospho-sugar transferases"/>
    <property type="match status" value="1"/>
</dbReference>
<dbReference type="SUPFAM" id="SSF141371">
    <property type="entry name" value="PilZ domain-like"/>
    <property type="match status" value="1"/>
</dbReference>
<name>BCSA_ECOLI</name>